<proteinExistence type="evidence at transcript level"/>
<name>DMC1A_ORYSI</name>
<protein>
    <recommendedName>
        <fullName evidence="11">Meiotic recombination protein DMC1 homolog A</fullName>
        <shortName evidence="9">OsDMC1A</shortName>
    </recommendedName>
    <alternativeName>
        <fullName evidence="9">OsDMC1</fullName>
    </alternativeName>
    <alternativeName>
        <fullName evidence="11">RiLIM15A</fullName>
    </alternativeName>
</protein>
<evidence type="ECO:0000250" key="1">
    <source>
        <dbReference type="UniProtKB" id="Q14565"/>
    </source>
</evidence>
<evidence type="ECO:0000250" key="2">
    <source>
        <dbReference type="UniProtKB" id="Q7GBF8"/>
    </source>
</evidence>
<evidence type="ECO:0000255" key="3"/>
<evidence type="ECO:0000269" key="4">
    <source>
    </source>
</evidence>
<evidence type="ECO:0000269" key="5">
    <source>
    </source>
</evidence>
<evidence type="ECO:0000269" key="6">
    <source>
    </source>
</evidence>
<evidence type="ECO:0000269" key="7">
    <source>
    </source>
</evidence>
<evidence type="ECO:0000269" key="8">
    <source ref="1"/>
</evidence>
<evidence type="ECO:0000303" key="9">
    <source>
    </source>
</evidence>
<evidence type="ECO:0000303" key="10">
    <source ref="1"/>
</evidence>
<evidence type="ECO:0000305" key="11"/>
<evidence type="ECO:0000305" key="12">
    <source>
    </source>
</evidence>
<evidence type="ECO:0000312" key="13">
    <source>
        <dbReference type="EMBL" id="EEC68851.1"/>
    </source>
</evidence>
<organism>
    <name type="scientific">Oryza sativa subsp. indica</name>
    <name type="common">Rice</name>
    <dbReference type="NCBI Taxonomy" id="39946"/>
    <lineage>
        <taxon>Eukaryota</taxon>
        <taxon>Viridiplantae</taxon>
        <taxon>Streptophyta</taxon>
        <taxon>Embryophyta</taxon>
        <taxon>Tracheophyta</taxon>
        <taxon>Spermatophyta</taxon>
        <taxon>Magnoliopsida</taxon>
        <taxon>Liliopsida</taxon>
        <taxon>Poales</taxon>
        <taxon>Poaceae</taxon>
        <taxon>BOP clade</taxon>
        <taxon>Oryzoideae</taxon>
        <taxon>Oryzeae</taxon>
        <taxon>Oryzinae</taxon>
        <taxon>Oryza</taxon>
        <taxon>Oryza sativa</taxon>
    </lineage>
</organism>
<dbReference type="EMBL" id="AF265548">
    <property type="protein sequence ID" value="AAL71907.1"/>
    <property type="molecule type" value="Genomic_DNA"/>
</dbReference>
<dbReference type="EMBL" id="AY123340">
    <property type="protein sequence ID" value="AAM76793.1"/>
    <property type="molecule type" value="Genomic_DNA"/>
</dbReference>
<dbReference type="EMBL" id="D70898">
    <property type="protein sequence ID" value="BAB61097.1"/>
    <property type="molecule type" value="Genomic_DNA"/>
</dbReference>
<dbReference type="EMBL" id="CM000137">
    <property type="protein sequence ID" value="EEC68851.1"/>
    <property type="status" value="ALT_SEQ"/>
    <property type="molecule type" value="Genomic_DNA"/>
</dbReference>
<dbReference type="SMR" id="B8BM09"/>
<dbReference type="STRING" id="39946.B8BM09"/>
<dbReference type="EnsemblPlants" id="OsGoSa_12g0003250.02">
    <property type="protein sequence ID" value="OsGoSa_12g0003250.02"/>
    <property type="gene ID" value="OsGoSa_12g0003250"/>
</dbReference>
<dbReference type="EnsemblPlants" id="OsIR64_12g0003220.02">
    <property type="protein sequence ID" value="OsIR64_12g0003220.02"/>
    <property type="gene ID" value="OsIR64_12g0003220"/>
</dbReference>
<dbReference type="EnsemblPlants" id="OsKYG_12g0003220.02">
    <property type="protein sequence ID" value="OsKYG_12g0003220.02"/>
    <property type="gene ID" value="OsKYG_12g0003220"/>
</dbReference>
<dbReference type="EnsemblPlants" id="OsLima_12g0003000.02">
    <property type="protein sequence ID" value="OsLima_12g0003000.02"/>
    <property type="gene ID" value="OsLima_12g0003000"/>
</dbReference>
<dbReference type="EnsemblPlants" id="OsLiXu_12g0003180.02">
    <property type="protein sequence ID" value="OsLiXu_12g0003180.02"/>
    <property type="gene ID" value="OsLiXu_12g0003180"/>
</dbReference>
<dbReference type="EnsemblPlants" id="OsMH63_12G003310_04">
    <property type="protein sequence ID" value="OsMH63_12G003310_04"/>
    <property type="gene ID" value="OsMH63_12G003310"/>
</dbReference>
<dbReference type="EnsemblPlants" id="OsPr106_12g0003240.02">
    <property type="protein sequence ID" value="OsPr106_12g0003240.02"/>
    <property type="gene ID" value="OsPr106_12g0003240"/>
</dbReference>
<dbReference type="EnsemblPlants" id="OsZS97_12G003200_01">
    <property type="protein sequence ID" value="OsZS97_12G003200_01"/>
    <property type="gene ID" value="OsZS97_12G003200"/>
</dbReference>
<dbReference type="Gramene" id="OsGoSa_12g0003250.02">
    <property type="protein sequence ID" value="OsGoSa_12g0003250.02"/>
    <property type="gene ID" value="OsGoSa_12g0003250"/>
</dbReference>
<dbReference type="Gramene" id="OsIR64_12g0003220.02">
    <property type="protein sequence ID" value="OsIR64_12g0003220.02"/>
    <property type="gene ID" value="OsIR64_12g0003220"/>
</dbReference>
<dbReference type="Gramene" id="OsKYG_12g0003220.02">
    <property type="protein sequence ID" value="OsKYG_12g0003220.02"/>
    <property type="gene ID" value="OsKYG_12g0003220"/>
</dbReference>
<dbReference type="Gramene" id="OsLima_12g0003000.02">
    <property type="protein sequence ID" value="OsLima_12g0003000.02"/>
    <property type="gene ID" value="OsLima_12g0003000"/>
</dbReference>
<dbReference type="Gramene" id="OsLiXu_12g0003180.02">
    <property type="protein sequence ID" value="OsLiXu_12g0003180.02"/>
    <property type="gene ID" value="OsLiXu_12g0003180"/>
</dbReference>
<dbReference type="Gramene" id="OsMH63_12G003310_04">
    <property type="protein sequence ID" value="OsMH63_12G003310_04"/>
    <property type="gene ID" value="OsMH63_12G003310"/>
</dbReference>
<dbReference type="Gramene" id="OsPr106_12g0003240.02">
    <property type="protein sequence ID" value="OsPr106_12g0003240.02"/>
    <property type="gene ID" value="OsPr106_12g0003240"/>
</dbReference>
<dbReference type="Gramene" id="OsZS97_12G003200_01">
    <property type="protein sequence ID" value="OsZS97_12G003200_01"/>
    <property type="gene ID" value="OsZS97_12G003200"/>
</dbReference>
<dbReference type="HOGENOM" id="CLU_041732_0_1_1"/>
<dbReference type="OrthoDB" id="10251254at2759"/>
<dbReference type="Proteomes" id="UP000007015">
    <property type="component" value="Chromosome 12"/>
</dbReference>
<dbReference type="GO" id="GO:0000794">
    <property type="term" value="C:condensed nuclear chromosome"/>
    <property type="evidence" value="ECO:0007669"/>
    <property type="project" value="TreeGrafter"/>
</dbReference>
<dbReference type="GO" id="GO:0005524">
    <property type="term" value="F:ATP binding"/>
    <property type="evidence" value="ECO:0007669"/>
    <property type="project" value="UniProtKB-KW"/>
</dbReference>
<dbReference type="GO" id="GO:0140664">
    <property type="term" value="F:ATP-dependent DNA damage sensor activity"/>
    <property type="evidence" value="ECO:0007669"/>
    <property type="project" value="InterPro"/>
</dbReference>
<dbReference type="GO" id="GO:0000150">
    <property type="term" value="F:DNA strand exchange activity"/>
    <property type="evidence" value="ECO:0007669"/>
    <property type="project" value="InterPro"/>
</dbReference>
<dbReference type="GO" id="GO:0003690">
    <property type="term" value="F:double-stranded DNA binding"/>
    <property type="evidence" value="ECO:0007669"/>
    <property type="project" value="TreeGrafter"/>
</dbReference>
<dbReference type="GO" id="GO:0003697">
    <property type="term" value="F:single-stranded DNA binding"/>
    <property type="evidence" value="ECO:0007669"/>
    <property type="project" value="TreeGrafter"/>
</dbReference>
<dbReference type="GO" id="GO:0070192">
    <property type="term" value="P:chromosome organization involved in meiotic cell cycle"/>
    <property type="evidence" value="ECO:0007669"/>
    <property type="project" value="TreeGrafter"/>
</dbReference>
<dbReference type="GO" id="GO:0000730">
    <property type="term" value="P:DNA recombinase assembly"/>
    <property type="evidence" value="ECO:0007669"/>
    <property type="project" value="TreeGrafter"/>
</dbReference>
<dbReference type="GO" id="GO:0042148">
    <property type="term" value="P:DNA strand invasion"/>
    <property type="evidence" value="ECO:0007669"/>
    <property type="project" value="TreeGrafter"/>
</dbReference>
<dbReference type="GO" id="GO:0006312">
    <property type="term" value="P:mitotic recombination"/>
    <property type="evidence" value="ECO:0007669"/>
    <property type="project" value="TreeGrafter"/>
</dbReference>
<dbReference type="GO" id="GO:0007131">
    <property type="term" value="P:reciprocal meiotic recombination"/>
    <property type="evidence" value="ECO:0007669"/>
    <property type="project" value="InterPro"/>
</dbReference>
<dbReference type="CDD" id="cd19514">
    <property type="entry name" value="DMC1"/>
    <property type="match status" value="1"/>
</dbReference>
<dbReference type="FunFam" id="3.40.50.300:FF:000239">
    <property type="entry name" value="Meiotic recombination protein DMC1"/>
    <property type="match status" value="1"/>
</dbReference>
<dbReference type="FunFam" id="1.10.150.20:FF:000043">
    <property type="entry name" value="Meiotic recombination protein DMC1 homolog"/>
    <property type="match status" value="1"/>
</dbReference>
<dbReference type="Gene3D" id="1.10.150.20">
    <property type="entry name" value="5' to 3' exonuclease, C-terminal subdomain"/>
    <property type="match status" value="1"/>
</dbReference>
<dbReference type="Gene3D" id="3.40.50.300">
    <property type="entry name" value="P-loop containing nucleotide triphosphate hydrolases"/>
    <property type="match status" value="1"/>
</dbReference>
<dbReference type="InterPro" id="IPR011940">
    <property type="entry name" value="Dmc1"/>
</dbReference>
<dbReference type="InterPro" id="IPR013632">
    <property type="entry name" value="DNA_recomb/repair_Rad51_C"/>
</dbReference>
<dbReference type="InterPro" id="IPR016467">
    <property type="entry name" value="DNA_recomb/repair_RecA-like"/>
</dbReference>
<dbReference type="InterPro" id="IPR010995">
    <property type="entry name" value="DNA_repair_Rad51/TF_NusA_a-hlx"/>
</dbReference>
<dbReference type="InterPro" id="IPR027417">
    <property type="entry name" value="P-loop_NTPase"/>
</dbReference>
<dbReference type="InterPro" id="IPR020588">
    <property type="entry name" value="RecA_ATP-bd"/>
</dbReference>
<dbReference type="InterPro" id="IPR020587">
    <property type="entry name" value="RecA_monomer-monomer_interface"/>
</dbReference>
<dbReference type="NCBIfam" id="NF003301">
    <property type="entry name" value="PRK04301.1"/>
    <property type="match status" value="1"/>
</dbReference>
<dbReference type="NCBIfam" id="TIGR02238">
    <property type="entry name" value="recomb_DMC1"/>
    <property type="match status" value="1"/>
</dbReference>
<dbReference type="PANTHER" id="PTHR22942:SF30">
    <property type="entry name" value="MEIOTIC RECOMBINATION PROTEIN DMC1_LIM15 HOMOLOG"/>
    <property type="match status" value="1"/>
</dbReference>
<dbReference type="PANTHER" id="PTHR22942">
    <property type="entry name" value="RECA/RAD51/RADA DNA STRAND-PAIRING FAMILY MEMBER"/>
    <property type="match status" value="1"/>
</dbReference>
<dbReference type="Pfam" id="PF08423">
    <property type="entry name" value="Rad51"/>
    <property type="match status" value="1"/>
</dbReference>
<dbReference type="PIRSF" id="PIRSF005856">
    <property type="entry name" value="Rad51"/>
    <property type="match status" value="1"/>
</dbReference>
<dbReference type="SUPFAM" id="SSF52540">
    <property type="entry name" value="P-loop containing nucleoside triphosphate hydrolases"/>
    <property type="match status" value="1"/>
</dbReference>
<dbReference type="SUPFAM" id="SSF47794">
    <property type="entry name" value="Rad51 N-terminal domain-like"/>
    <property type="match status" value="1"/>
</dbReference>
<dbReference type="PROSITE" id="PS50162">
    <property type="entry name" value="RECA_2"/>
    <property type="match status" value="1"/>
</dbReference>
<dbReference type="PROSITE" id="PS50163">
    <property type="entry name" value="RECA_3"/>
    <property type="match status" value="1"/>
</dbReference>
<feature type="chain" id="PRO_0000445041" description="Meiotic recombination protein DMC1 homolog A">
    <location>
        <begin position="1"/>
        <end position="344"/>
    </location>
</feature>
<feature type="binding site" evidence="3">
    <location>
        <begin position="133"/>
        <end position="140"/>
    </location>
    <ligand>
        <name>ATP</name>
        <dbReference type="ChEBI" id="CHEBI:30616"/>
    </ligand>
</feature>
<feature type="binding site" evidence="1">
    <location>
        <position position="235"/>
    </location>
    <ligand>
        <name>dsDNA</name>
        <dbReference type="ChEBI" id="CHEBI:4705"/>
    </ligand>
</feature>
<feature type="binding site" evidence="1">
    <location>
        <position position="235"/>
    </location>
    <ligand>
        <name>ssDNA</name>
        <dbReference type="ChEBI" id="CHEBI:9160"/>
    </ligand>
</feature>
<feature type="binding site" evidence="1">
    <location>
        <position position="238"/>
    </location>
    <ligand>
        <name>ssDNA</name>
        <dbReference type="ChEBI" id="CHEBI:9160"/>
    </ligand>
</feature>
<feature type="binding site" evidence="1">
    <location>
        <position position="241"/>
    </location>
    <ligand>
        <name>dsDNA</name>
        <dbReference type="ChEBI" id="CHEBI:4705"/>
    </ligand>
</feature>
<feature type="binding site" evidence="1">
    <location>
        <position position="241"/>
    </location>
    <ligand>
        <name>ssDNA</name>
        <dbReference type="ChEBI" id="CHEBI:9160"/>
    </ligand>
</feature>
<feature type="binding site" evidence="1">
    <location>
        <position position="247"/>
    </location>
    <ligand>
        <name>dsDNA</name>
        <dbReference type="ChEBI" id="CHEBI:4705"/>
    </ligand>
</feature>
<feature type="binding site" evidence="1">
    <location>
        <position position="247"/>
    </location>
    <ligand>
        <name>ssDNA</name>
        <dbReference type="ChEBI" id="CHEBI:9160"/>
    </ligand>
</feature>
<feature type="binding site" evidence="1">
    <location>
        <position position="315"/>
    </location>
    <ligand>
        <name>ssDNA</name>
        <dbReference type="ChEBI" id="CHEBI:9160"/>
    </ligand>
</feature>
<feature type="sequence conflict" description="In Ref. 3; BAB61097." evidence="11" ref="3">
    <original>D</original>
    <variation>Y</variation>
    <location>
        <position position="116"/>
    </location>
</feature>
<feature type="sequence conflict" description="In Ref. 2; AAM76793." evidence="11" ref="2">
    <original>T</original>
    <variation>A</variation>
    <location>
        <position position="150"/>
    </location>
</feature>
<feature type="sequence conflict" description="In Ref. 2; AAM76793." evidence="11" ref="2">
    <original>E</original>
    <variation>K</variation>
    <location>
        <position position="246"/>
    </location>
</feature>
<feature type="sequence conflict" description="In Ref. 3; BAB61097." evidence="11" ref="3">
    <original>VL</original>
    <variation>RV</variation>
    <location>
        <begin position="296"/>
        <end position="297"/>
    </location>
</feature>
<reference key="1">
    <citation type="journal article" date="2002" name="Sex. Plant Reprod.">
        <title>Two rice DMC1 genes are differentially expressed during meiosis and during haploid and diploid mitosis.</title>
        <authorList>
            <person name="Kathiresan A."/>
            <person name="Khush G.S."/>
            <person name="Bennett J."/>
        </authorList>
        <dbReference type="AGRICOLA" id="IND23274239"/>
    </citation>
    <scope>NUCLEOTIDE SEQUENCE [GENOMIC DNA]</scope>
    <scope>TISSUE SPECIFICITY</scope>
    <source>
        <strain>cv. IR64</strain>
    </source>
</reference>
<reference key="2">
    <citation type="journal article" date="2005" name="Plant Mol. Biol.">
        <title>DNA binding and pairing activity of OsDmc1, a recombinase from rice.</title>
        <authorList>
            <person name="Kant C.R."/>
            <person name="Rao B.J."/>
            <person name="Sainis J.K."/>
        </authorList>
    </citation>
    <scope>NUCLEOTIDE SEQUENCE [GENOMIC DNA]</scope>
    <scope>FUNCTION</scope>
</reference>
<reference key="3">
    <citation type="submission" date="1995-10" db="EMBL/GenBank/DDBJ databases">
        <title>Genome structure of RiLIM15, a rice homologue of meiosis-specific recA-like genes.</title>
        <authorList>
            <person name="Sato S."/>
            <person name="Asamizu E."/>
            <person name="Tabata S."/>
        </authorList>
    </citation>
    <scope>NUCLEOTIDE SEQUENCE [GENOMIC DNA]</scope>
    <source>
        <strain>cv. IR36</strain>
    </source>
</reference>
<reference key="4">
    <citation type="journal article" date="2005" name="PLoS Biol.">
        <title>The genomes of Oryza sativa: a history of duplications.</title>
        <authorList>
            <person name="Yu J."/>
            <person name="Wang J."/>
            <person name="Lin W."/>
            <person name="Li S."/>
            <person name="Li H."/>
            <person name="Zhou J."/>
            <person name="Ni P."/>
            <person name="Dong W."/>
            <person name="Hu S."/>
            <person name="Zeng C."/>
            <person name="Zhang J."/>
            <person name="Zhang Y."/>
            <person name="Li R."/>
            <person name="Xu Z."/>
            <person name="Li S."/>
            <person name="Li X."/>
            <person name="Zheng H."/>
            <person name="Cong L."/>
            <person name="Lin L."/>
            <person name="Yin J."/>
            <person name="Geng J."/>
            <person name="Li G."/>
            <person name="Shi J."/>
            <person name="Liu J."/>
            <person name="Lv H."/>
            <person name="Li J."/>
            <person name="Wang J."/>
            <person name="Deng Y."/>
            <person name="Ran L."/>
            <person name="Shi X."/>
            <person name="Wang X."/>
            <person name="Wu Q."/>
            <person name="Li C."/>
            <person name="Ren X."/>
            <person name="Wang J."/>
            <person name="Wang X."/>
            <person name="Li D."/>
            <person name="Liu D."/>
            <person name="Zhang X."/>
            <person name="Ji Z."/>
            <person name="Zhao W."/>
            <person name="Sun Y."/>
            <person name="Zhang Z."/>
            <person name="Bao J."/>
            <person name="Han Y."/>
            <person name="Dong L."/>
            <person name="Ji J."/>
            <person name="Chen P."/>
            <person name="Wu S."/>
            <person name="Liu J."/>
            <person name="Xiao Y."/>
            <person name="Bu D."/>
            <person name="Tan J."/>
            <person name="Yang L."/>
            <person name="Ye C."/>
            <person name="Zhang J."/>
            <person name="Xu J."/>
            <person name="Zhou Y."/>
            <person name="Yu Y."/>
            <person name="Zhang B."/>
            <person name="Zhuang S."/>
            <person name="Wei H."/>
            <person name="Liu B."/>
            <person name="Lei M."/>
            <person name="Yu H."/>
            <person name="Li Y."/>
            <person name="Xu H."/>
            <person name="Wei S."/>
            <person name="He X."/>
            <person name="Fang L."/>
            <person name="Zhang Z."/>
            <person name="Zhang Y."/>
            <person name="Huang X."/>
            <person name="Su Z."/>
            <person name="Tong W."/>
            <person name="Li J."/>
            <person name="Tong Z."/>
            <person name="Li S."/>
            <person name="Ye J."/>
            <person name="Wang L."/>
            <person name="Fang L."/>
            <person name="Lei T."/>
            <person name="Chen C.-S."/>
            <person name="Chen H.-C."/>
            <person name="Xu Z."/>
            <person name="Li H."/>
            <person name="Huang H."/>
            <person name="Zhang F."/>
            <person name="Xu H."/>
            <person name="Li N."/>
            <person name="Zhao C."/>
            <person name="Li S."/>
            <person name="Dong L."/>
            <person name="Huang Y."/>
            <person name="Li L."/>
            <person name="Xi Y."/>
            <person name="Qi Q."/>
            <person name="Li W."/>
            <person name="Zhang B."/>
            <person name="Hu W."/>
            <person name="Zhang Y."/>
            <person name="Tian X."/>
            <person name="Jiao Y."/>
            <person name="Liang X."/>
            <person name="Jin J."/>
            <person name="Gao L."/>
            <person name="Zheng W."/>
            <person name="Hao B."/>
            <person name="Liu S.-M."/>
            <person name="Wang W."/>
            <person name="Yuan L."/>
            <person name="Cao M."/>
            <person name="McDermott J."/>
            <person name="Samudrala R."/>
            <person name="Wang J."/>
            <person name="Wong G.K.-S."/>
            <person name="Yang H."/>
        </authorList>
    </citation>
    <scope>NUCLEOTIDE SEQUENCE [LARGE SCALE GENOMIC DNA]</scope>
    <source>
        <strain>cv. 93-11</strain>
    </source>
</reference>
<reference key="5">
    <citation type="journal article" date="2006" name="FEBS J.">
        <title>DNA strand exchange activity of rice recombinase OsDmc1 monitored by fluorescence resonance energy transfer and the role of ATP hydrolysis.</title>
        <authorList>
            <person name="Rajanikant C."/>
            <person name="Kumbhakar M."/>
            <person name="Pal H."/>
            <person name="Rao B.J."/>
            <person name="Sainis J.K."/>
        </authorList>
    </citation>
    <scope>FUNCTION</scope>
</reference>
<reference key="6">
    <citation type="journal article" date="2007" name="Plant Mol. Biol.">
        <title>OsDMC1 is required for homologous pairing in Oryza sativa.</title>
        <authorList>
            <person name="Deng Z.Y."/>
            <person name="Wang T."/>
        </authorList>
    </citation>
    <scope>FUNCTION</scope>
</reference>
<reference key="7">
    <citation type="journal article" date="2015" name="Indian J. Biochem. Biophys.">
        <title>Comparison of activity of OsDmc1A recombinase of rice (Oryza sativa) in presence of Ca2+ and Mg2+ ions.</title>
        <authorList>
            <person name="Chittela R.K."/>
            <person name="Melzer M."/>
            <person name="Sainis J.K."/>
        </authorList>
    </citation>
    <scope>FUNCTION</scope>
</reference>
<keyword id="KW-0067">ATP-binding</keyword>
<keyword id="KW-0131">Cell cycle</keyword>
<keyword id="KW-0238">DNA-binding</keyword>
<keyword id="KW-0469">Meiosis</keyword>
<keyword id="KW-0547">Nucleotide-binding</keyword>
<keyword id="KW-0539">Nucleus</keyword>
<keyword id="KW-1185">Reference proteome</keyword>
<accession>B8BM09</accession>
<accession>Q8L809</accession>
<accession>Q8W2E6</accession>
<accession>Q949I5</accession>
<gene>
    <name evidence="10" type="primary">DMC1A</name>
    <name evidence="9" type="synonym">DMC1</name>
    <name evidence="13" type="ORF">OsI_37443</name>
</gene>
<sequence length="344" mass="37572">MAPSKQYSEGGQLQLMDAERIEEEEECFESIDKLISQGINSGDVKKLQDAGIYTCNGLMMHTKKSLTGIKGLSEAKVDKICEAAEKLLSQGFITGSDLLIKRKSVVRITTGSQALDKLLGGGIETLCITEAFGEFRSGKTQLAHTLCVSTQLPIHMHGGNGKVAYIDTEGTFRPERIVPIAERFGMDANAVLDNIIYARAYTYEHQYNLLLGLAAKMAEEPFRLLIVDSVIALFRVDFSGRGELAERQQKLAQMLSRLTKIAEEFNVAVYITNQVIADPGGGMFITDLKKPAGGHVLAHAATIRLMLRKGKGEQRVCKIFDAPNLPEGEAVFQVTSGGIMDAKD</sequence>
<comment type="function">
    <text evidence="2 4 5 6 7 12">Recombinase that may participate in meiotic recombination, specifically in homologous strand assimilation, which is required for the resolution of meiotic double-strand breaks (Probable). Exhibits DNA-dependent ATPase activity when bound to single-stranded DNA (ssDNA). Mediates renaturation of homologous complementary strands as well as assimilation of single strands into homologous supercoiled duplexes leading to D-loop formation (PubMed:15821864). Binds circular single-stranded DNA (ssDNA) and circular double-stranded DNA (dsDNA) in vitro (PubMed:15821864, PubMed:26118128). Catalyzes DNA homologous renaturation and DNA strand exchange. The rates of these activities are dependent on the state of ATP hydrolysis (PubMed:16689935, PubMed:26118128). Forms helical filaments along ssDNA and dsDNA, and promotes strand exchange between ssDNA and dsDNA with long DNA substrates of several thousand base pairs. The presence of the replication protein A is not required for this activity (By similarity). Seems to be required for homologous pairing and subsequent chromosome segregation during male meiosis (PubMed:17562186). May be not directly required for homologous pairing during male meiosis. Required for synaptonemal complex assembly and crossover formation. Functions redundantly with DMC1B (By similarity).</text>
</comment>
<comment type="subcellular location">
    <subcellularLocation>
        <location evidence="2">Nucleus</location>
    </subcellularLocation>
</comment>
<comment type="tissue specificity">
    <text evidence="8">Expressed in pollen mother cells and root tips.</text>
</comment>
<comment type="miscellaneous">
    <text evidence="6">Plant silencing DMC1A are sterile due to defects in homologous pairing and subsequent chromosome segregation during male meiosis.</text>
</comment>
<comment type="similarity">
    <text evidence="11">Belongs to the RecA family. DMC1 subfamily.</text>
</comment>
<comment type="sequence caution" evidence="11">
    <conflict type="erroneous gene model prediction">
        <sequence resource="EMBL-CDS" id="EEC68851"/>
    </conflict>
</comment>